<keyword id="KW-0131">Cell cycle</keyword>
<keyword id="KW-0132">Cell division</keyword>
<keyword id="KW-0143">Chaperone</keyword>
<keyword id="KW-0963">Cytoplasm</keyword>
<keyword id="KW-0413">Isomerase</keyword>
<keyword id="KW-0697">Rotamase</keyword>
<accession>Q07NN7</accession>
<evidence type="ECO:0000255" key="1">
    <source>
        <dbReference type="HAMAP-Rule" id="MF_00303"/>
    </source>
</evidence>
<protein>
    <recommendedName>
        <fullName evidence="1">Trigger factor</fullName>
        <shortName evidence="1">TF</shortName>
        <ecNumber evidence="1">5.2.1.8</ecNumber>
    </recommendedName>
    <alternativeName>
        <fullName evidence="1">PPIase</fullName>
    </alternativeName>
</protein>
<comment type="function">
    <text evidence="1">Involved in protein export. Acts as a chaperone by maintaining the newly synthesized protein in an open conformation. Functions as a peptidyl-prolyl cis-trans isomerase.</text>
</comment>
<comment type="catalytic activity">
    <reaction evidence="1">
        <text>[protein]-peptidylproline (omega=180) = [protein]-peptidylproline (omega=0)</text>
        <dbReference type="Rhea" id="RHEA:16237"/>
        <dbReference type="Rhea" id="RHEA-COMP:10747"/>
        <dbReference type="Rhea" id="RHEA-COMP:10748"/>
        <dbReference type="ChEBI" id="CHEBI:83833"/>
        <dbReference type="ChEBI" id="CHEBI:83834"/>
        <dbReference type="EC" id="5.2.1.8"/>
    </reaction>
</comment>
<comment type="subcellular location">
    <subcellularLocation>
        <location>Cytoplasm</location>
    </subcellularLocation>
    <text evidence="1">About half TF is bound to the ribosome near the polypeptide exit tunnel while the other half is free in the cytoplasm.</text>
</comment>
<comment type="domain">
    <text evidence="1">Consists of 3 domains; the N-terminus binds the ribosome, the middle domain has PPIase activity, while the C-terminus has intrinsic chaperone activity on its own.</text>
</comment>
<comment type="similarity">
    <text evidence="1">Belongs to the FKBP-type PPIase family. Tig subfamily.</text>
</comment>
<reference key="1">
    <citation type="submission" date="2006-09" db="EMBL/GenBank/DDBJ databases">
        <title>Complete sequence of Rhodopseudomonas palustris BisA53.</title>
        <authorList>
            <consortium name="US DOE Joint Genome Institute"/>
            <person name="Copeland A."/>
            <person name="Lucas S."/>
            <person name="Lapidus A."/>
            <person name="Barry K."/>
            <person name="Detter J.C."/>
            <person name="Glavina del Rio T."/>
            <person name="Hammon N."/>
            <person name="Israni S."/>
            <person name="Dalin E."/>
            <person name="Tice H."/>
            <person name="Pitluck S."/>
            <person name="Chain P."/>
            <person name="Malfatti S."/>
            <person name="Shin M."/>
            <person name="Vergez L."/>
            <person name="Schmutz J."/>
            <person name="Larimer F."/>
            <person name="Land M."/>
            <person name="Hauser L."/>
            <person name="Pelletier D.A."/>
            <person name="Kyrpides N."/>
            <person name="Kim E."/>
            <person name="Harwood C.S."/>
            <person name="Oda Y."/>
            <person name="Richardson P."/>
        </authorList>
    </citation>
    <scope>NUCLEOTIDE SEQUENCE [LARGE SCALE GENOMIC DNA]</scope>
    <source>
        <strain>BisA53</strain>
    </source>
</reference>
<sequence>MQVKETVTDGLKREFQVTLAVSDIGSQVDARLDELKDKVRLNGFRPGKVPLSHLKRTYGRSVTAEVLEKLIRETNDNIFTERGFRLATEPKITMPTEAKEVEDVLAGNADLNYTVAVEVVPEIQLVDFKTISVEKPVVEVGDSDVDDAIKRIVEANRGYDDKGEGATAASGDRVTVSFKGSIDGTPFDGGSAEGIPVVIGSGTFIPGFEDQLIGIAVGETRTIKATFPTNYATAELAGKAAEFETTATLVEAPKDTPADDEFAKTLGLESLDKLKEAARGRLAAEYAGVSRQRVKRALLDRLDEAHQFEAPATLVEQEFEALWRSIVGEMTSTGSTFESENTTEDAAKEEYRKIADRRVRLGLVLSEIGEKNKIQVTDDEVSRAVMERARQMPGREKEVWEFYRKTPEAVAQLRAPIFEDKVVDFILELATVTEKPVSKEELYKDDDADKSAA</sequence>
<organism>
    <name type="scientific">Rhodopseudomonas palustris (strain BisA53)</name>
    <dbReference type="NCBI Taxonomy" id="316055"/>
    <lineage>
        <taxon>Bacteria</taxon>
        <taxon>Pseudomonadati</taxon>
        <taxon>Pseudomonadota</taxon>
        <taxon>Alphaproteobacteria</taxon>
        <taxon>Hyphomicrobiales</taxon>
        <taxon>Nitrobacteraceae</taxon>
        <taxon>Rhodopseudomonas</taxon>
    </lineage>
</organism>
<name>TIG_RHOP5</name>
<gene>
    <name evidence="1" type="primary">tig</name>
    <name type="ordered locus">RPE_2509</name>
</gene>
<feature type="chain" id="PRO_1000022740" description="Trigger factor">
    <location>
        <begin position="1"/>
        <end position="453"/>
    </location>
</feature>
<feature type="domain" description="PPIase FKBP-type" evidence="1">
    <location>
        <begin position="171"/>
        <end position="256"/>
    </location>
</feature>
<proteinExistence type="inferred from homology"/>
<dbReference type="EC" id="5.2.1.8" evidence="1"/>
<dbReference type="EMBL" id="CP000463">
    <property type="protein sequence ID" value="ABJ06447.1"/>
    <property type="molecule type" value="Genomic_DNA"/>
</dbReference>
<dbReference type="SMR" id="Q07NN7"/>
<dbReference type="STRING" id="316055.RPE_2509"/>
<dbReference type="KEGG" id="rpe:RPE_2509"/>
<dbReference type="eggNOG" id="COG0544">
    <property type="taxonomic scope" value="Bacteria"/>
</dbReference>
<dbReference type="HOGENOM" id="CLU_033058_2_2_5"/>
<dbReference type="OrthoDB" id="9767721at2"/>
<dbReference type="GO" id="GO:0005737">
    <property type="term" value="C:cytoplasm"/>
    <property type="evidence" value="ECO:0007669"/>
    <property type="project" value="UniProtKB-SubCell"/>
</dbReference>
<dbReference type="GO" id="GO:0003755">
    <property type="term" value="F:peptidyl-prolyl cis-trans isomerase activity"/>
    <property type="evidence" value="ECO:0007669"/>
    <property type="project" value="UniProtKB-UniRule"/>
</dbReference>
<dbReference type="GO" id="GO:0044183">
    <property type="term" value="F:protein folding chaperone"/>
    <property type="evidence" value="ECO:0007669"/>
    <property type="project" value="TreeGrafter"/>
</dbReference>
<dbReference type="GO" id="GO:0043022">
    <property type="term" value="F:ribosome binding"/>
    <property type="evidence" value="ECO:0007669"/>
    <property type="project" value="TreeGrafter"/>
</dbReference>
<dbReference type="GO" id="GO:0051083">
    <property type="term" value="P:'de novo' cotranslational protein folding"/>
    <property type="evidence" value="ECO:0007669"/>
    <property type="project" value="TreeGrafter"/>
</dbReference>
<dbReference type="GO" id="GO:0051301">
    <property type="term" value="P:cell division"/>
    <property type="evidence" value="ECO:0007669"/>
    <property type="project" value="UniProtKB-KW"/>
</dbReference>
<dbReference type="GO" id="GO:0061077">
    <property type="term" value="P:chaperone-mediated protein folding"/>
    <property type="evidence" value="ECO:0007669"/>
    <property type="project" value="TreeGrafter"/>
</dbReference>
<dbReference type="GO" id="GO:0015031">
    <property type="term" value="P:protein transport"/>
    <property type="evidence" value="ECO:0007669"/>
    <property type="project" value="UniProtKB-UniRule"/>
</dbReference>
<dbReference type="GO" id="GO:0043335">
    <property type="term" value="P:protein unfolding"/>
    <property type="evidence" value="ECO:0007669"/>
    <property type="project" value="TreeGrafter"/>
</dbReference>
<dbReference type="FunFam" id="3.10.50.40:FF:000001">
    <property type="entry name" value="Trigger factor"/>
    <property type="match status" value="1"/>
</dbReference>
<dbReference type="Gene3D" id="3.10.50.40">
    <property type="match status" value="1"/>
</dbReference>
<dbReference type="Gene3D" id="3.30.70.1050">
    <property type="entry name" value="Trigger factor ribosome-binding domain"/>
    <property type="match status" value="1"/>
</dbReference>
<dbReference type="Gene3D" id="1.10.3120.10">
    <property type="entry name" value="Trigger factor, C-terminal domain"/>
    <property type="match status" value="1"/>
</dbReference>
<dbReference type="HAMAP" id="MF_00303">
    <property type="entry name" value="Trigger_factor_Tig"/>
    <property type="match status" value="1"/>
</dbReference>
<dbReference type="InterPro" id="IPR046357">
    <property type="entry name" value="PPIase_dom_sf"/>
</dbReference>
<dbReference type="InterPro" id="IPR001179">
    <property type="entry name" value="PPIase_FKBP_dom"/>
</dbReference>
<dbReference type="InterPro" id="IPR005215">
    <property type="entry name" value="Trig_fac"/>
</dbReference>
<dbReference type="InterPro" id="IPR008880">
    <property type="entry name" value="Trigger_fac_C"/>
</dbReference>
<dbReference type="InterPro" id="IPR037041">
    <property type="entry name" value="Trigger_fac_C_sf"/>
</dbReference>
<dbReference type="InterPro" id="IPR008881">
    <property type="entry name" value="Trigger_fac_ribosome-bd_bac"/>
</dbReference>
<dbReference type="InterPro" id="IPR036611">
    <property type="entry name" value="Trigger_fac_ribosome-bd_sf"/>
</dbReference>
<dbReference type="InterPro" id="IPR027304">
    <property type="entry name" value="Trigger_fact/SurA_dom_sf"/>
</dbReference>
<dbReference type="NCBIfam" id="TIGR00115">
    <property type="entry name" value="tig"/>
    <property type="match status" value="1"/>
</dbReference>
<dbReference type="PANTHER" id="PTHR30560">
    <property type="entry name" value="TRIGGER FACTOR CHAPERONE AND PEPTIDYL-PROLYL CIS/TRANS ISOMERASE"/>
    <property type="match status" value="1"/>
</dbReference>
<dbReference type="PANTHER" id="PTHR30560:SF3">
    <property type="entry name" value="TRIGGER FACTOR-LIKE PROTEIN TIG, CHLOROPLASTIC"/>
    <property type="match status" value="1"/>
</dbReference>
<dbReference type="Pfam" id="PF00254">
    <property type="entry name" value="FKBP_C"/>
    <property type="match status" value="1"/>
</dbReference>
<dbReference type="Pfam" id="PF05698">
    <property type="entry name" value="Trigger_C"/>
    <property type="match status" value="1"/>
</dbReference>
<dbReference type="Pfam" id="PF05697">
    <property type="entry name" value="Trigger_N"/>
    <property type="match status" value="1"/>
</dbReference>
<dbReference type="PIRSF" id="PIRSF003095">
    <property type="entry name" value="Trigger_factor"/>
    <property type="match status" value="1"/>
</dbReference>
<dbReference type="SUPFAM" id="SSF54534">
    <property type="entry name" value="FKBP-like"/>
    <property type="match status" value="1"/>
</dbReference>
<dbReference type="SUPFAM" id="SSF109998">
    <property type="entry name" value="Triger factor/SurA peptide-binding domain-like"/>
    <property type="match status" value="1"/>
</dbReference>
<dbReference type="SUPFAM" id="SSF102735">
    <property type="entry name" value="Trigger factor ribosome-binding domain"/>
    <property type="match status" value="1"/>
</dbReference>
<dbReference type="PROSITE" id="PS50059">
    <property type="entry name" value="FKBP_PPIASE"/>
    <property type="match status" value="1"/>
</dbReference>